<sequence length="133" mass="14516">MSFVKEFREFAMRGNVVDMAVGVIIGGAFGKIVSSLVGDVVMPVLGILTGGVDFKDLSIVLKEAAGEVPAVTLNYGAFIQTVFDFVIIAFAIFLMIKALNKLKREEPKVEEPAEPKLSNEEVLLTEIRDLLKK</sequence>
<keyword id="KW-0997">Cell inner membrane</keyword>
<keyword id="KW-1003">Cell membrane</keyword>
<keyword id="KW-0407">Ion channel</keyword>
<keyword id="KW-0406">Ion transport</keyword>
<keyword id="KW-0472">Membrane</keyword>
<keyword id="KW-1185">Reference proteome</keyword>
<keyword id="KW-0812">Transmembrane</keyword>
<keyword id="KW-1133">Transmembrane helix</keyword>
<keyword id="KW-0813">Transport</keyword>
<comment type="function">
    <text evidence="1">Channel that opens in response to stretch forces in the membrane lipid bilayer. May participate in the regulation of osmotic pressure changes within the cell.</text>
</comment>
<comment type="subunit">
    <text evidence="1">Homopentamer.</text>
</comment>
<comment type="subcellular location">
    <subcellularLocation>
        <location evidence="1">Cell inner membrane</location>
        <topology evidence="1">Multi-pass membrane protein</topology>
    </subcellularLocation>
</comment>
<comment type="similarity">
    <text evidence="1 2">Belongs to the MscL family.</text>
</comment>
<reference key="1">
    <citation type="journal article" date="2001" name="Proc. Natl. Acad. Sci. U.S.A.">
        <title>Complete genomic sequence of Pasteurella multocida Pm70.</title>
        <authorList>
            <person name="May B.J."/>
            <person name="Zhang Q."/>
            <person name="Li L.L."/>
            <person name="Paustian M.L."/>
            <person name="Whittam T.S."/>
            <person name="Kapur V."/>
        </authorList>
    </citation>
    <scope>NUCLEOTIDE SEQUENCE [LARGE SCALE GENOMIC DNA]</scope>
    <source>
        <strain>Pm70</strain>
    </source>
</reference>
<dbReference type="EMBL" id="AE004439">
    <property type="protein sequence ID" value="AAK03648.1"/>
    <property type="molecule type" value="Genomic_DNA"/>
</dbReference>
<dbReference type="RefSeq" id="WP_005718275.1">
    <property type="nucleotide sequence ID" value="NC_002663.1"/>
</dbReference>
<dbReference type="SMR" id="P57950"/>
<dbReference type="STRING" id="272843.PM1564"/>
<dbReference type="EnsemblBacteria" id="AAK03648">
    <property type="protein sequence ID" value="AAK03648"/>
    <property type="gene ID" value="PM1564"/>
</dbReference>
<dbReference type="GeneID" id="77206871"/>
<dbReference type="KEGG" id="pmu:PM1564"/>
<dbReference type="HOGENOM" id="CLU_095787_0_0_6"/>
<dbReference type="OrthoDB" id="9810350at2"/>
<dbReference type="Proteomes" id="UP000000809">
    <property type="component" value="Chromosome"/>
</dbReference>
<dbReference type="GO" id="GO:0005886">
    <property type="term" value="C:plasma membrane"/>
    <property type="evidence" value="ECO:0007669"/>
    <property type="project" value="UniProtKB-SubCell"/>
</dbReference>
<dbReference type="GO" id="GO:0008381">
    <property type="term" value="F:mechanosensitive monoatomic ion channel activity"/>
    <property type="evidence" value="ECO:0007669"/>
    <property type="project" value="UniProtKB-UniRule"/>
</dbReference>
<dbReference type="FunFam" id="1.10.1200.120:FF:000001">
    <property type="entry name" value="Large-conductance mechanosensitive channel"/>
    <property type="match status" value="1"/>
</dbReference>
<dbReference type="Gene3D" id="1.10.1200.120">
    <property type="entry name" value="Large-conductance mechanosensitive channel, MscL, domain 1"/>
    <property type="match status" value="1"/>
</dbReference>
<dbReference type="HAMAP" id="MF_00115">
    <property type="entry name" value="MscL"/>
    <property type="match status" value="1"/>
</dbReference>
<dbReference type="InterPro" id="IPR019823">
    <property type="entry name" value="Mechanosensitive_channel_CS"/>
</dbReference>
<dbReference type="InterPro" id="IPR001185">
    <property type="entry name" value="MS_channel"/>
</dbReference>
<dbReference type="InterPro" id="IPR037673">
    <property type="entry name" value="MSC/AndL"/>
</dbReference>
<dbReference type="InterPro" id="IPR036019">
    <property type="entry name" value="MscL_channel"/>
</dbReference>
<dbReference type="NCBIfam" id="TIGR00220">
    <property type="entry name" value="mscL"/>
    <property type="match status" value="1"/>
</dbReference>
<dbReference type="NCBIfam" id="NF001843">
    <property type="entry name" value="PRK00567.1-4"/>
    <property type="match status" value="1"/>
</dbReference>
<dbReference type="PANTHER" id="PTHR30266:SF2">
    <property type="entry name" value="LARGE-CONDUCTANCE MECHANOSENSITIVE CHANNEL"/>
    <property type="match status" value="1"/>
</dbReference>
<dbReference type="PANTHER" id="PTHR30266">
    <property type="entry name" value="MECHANOSENSITIVE CHANNEL MSCL"/>
    <property type="match status" value="1"/>
</dbReference>
<dbReference type="Pfam" id="PF01741">
    <property type="entry name" value="MscL"/>
    <property type="match status" value="1"/>
</dbReference>
<dbReference type="PRINTS" id="PR01264">
    <property type="entry name" value="MECHCHANNEL"/>
</dbReference>
<dbReference type="SUPFAM" id="SSF81330">
    <property type="entry name" value="Gated mechanosensitive channel"/>
    <property type="match status" value="1"/>
</dbReference>
<dbReference type="PROSITE" id="PS01327">
    <property type="entry name" value="MSCL"/>
    <property type="match status" value="1"/>
</dbReference>
<name>MSCL_PASMU</name>
<gene>
    <name evidence="1" type="primary">mscL</name>
    <name type="ordered locus">PM1564</name>
</gene>
<evidence type="ECO:0000255" key="1">
    <source>
        <dbReference type="HAMAP-Rule" id="MF_00115"/>
    </source>
</evidence>
<evidence type="ECO:0000305" key="2"/>
<protein>
    <recommendedName>
        <fullName evidence="1">Large-conductance mechanosensitive channel</fullName>
    </recommendedName>
</protein>
<proteinExistence type="inferred from homology"/>
<feature type="chain" id="PRO_0000192453" description="Large-conductance mechanosensitive channel">
    <location>
        <begin position="1"/>
        <end position="133"/>
    </location>
</feature>
<feature type="transmembrane region" description="Helical" evidence="1">
    <location>
        <begin position="10"/>
        <end position="30"/>
    </location>
</feature>
<feature type="transmembrane region" description="Helical" evidence="1">
    <location>
        <begin position="76"/>
        <end position="96"/>
    </location>
</feature>
<organism>
    <name type="scientific">Pasteurella multocida (strain Pm70)</name>
    <dbReference type="NCBI Taxonomy" id="272843"/>
    <lineage>
        <taxon>Bacteria</taxon>
        <taxon>Pseudomonadati</taxon>
        <taxon>Pseudomonadota</taxon>
        <taxon>Gammaproteobacteria</taxon>
        <taxon>Pasteurellales</taxon>
        <taxon>Pasteurellaceae</taxon>
        <taxon>Pasteurella</taxon>
    </lineage>
</organism>
<accession>P57950</accession>